<proteinExistence type="inferred from homology"/>
<evidence type="ECO:0000255" key="1">
    <source>
        <dbReference type="HAMAP-Rule" id="MF_00385"/>
    </source>
</evidence>
<evidence type="ECO:0000305" key="2"/>
<comment type="similarity">
    <text evidence="1">Belongs to the bacterial ribosomal protein bS16 family.</text>
</comment>
<feature type="chain" id="PRO_1000060706" description="Small ribosomal subunit protein bS16">
    <location>
        <begin position="1"/>
        <end position="75"/>
    </location>
</feature>
<protein>
    <recommendedName>
        <fullName evidence="1">Small ribosomal subunit protein bS16</fullName>
    </recommendedName>
    <alternativeName>
        <fullName evidence="2">30S ribosomal protein S16</fullName>
    </alternativeName>
</protein>
<reference key="1">
    <citation type="journal article" date="2007" name="PLoS ONE">
        <title>The complete genome sequence and analysis of the Epsilonproteobacterium Arcobacter butzleri.</title>
        <authorList>
            <person name="Miller W.G."/>
            <person name="Parker C.T."/>
            <person name="Rubenfield M."/>
            <person name="Mendz G.L."/>
            <person name="Woesten M.M.S.M."/>
            <person name="Ussery D.W."/>
            <person name="Stolz J.F."/>
            <person name="Binnewies T.T."/>
            <person name="Hallin P.F."/>
            <person name="Wang G."/>
            <person name="Malek J.A."/>
            <person name="Rogosin A."/>
            <person name="Stanker L.H."/>
            <person name="Mandrell R.E."/>
        </authorList>
    </citation>
    <scope>NUCLEOTIDE SEQUENCE [LARGE SCALE GENOMIC DNA]</scope>
    <source>
        <strain>RM4018</strain>
    </source>
</reference>
<gene>
    <name evidence="1" type="primary">rpsP</name>
    <name type="ordered locus">Abu_1973</name>
</gene>
<keyword id="KW-1185">Reference proteome</keyword>
<keyword id="KW-0687">Ribonucleoprotein</keyword>
<keyword id="KW-0689">Ribosomal protein</keyword>
<sequence>MTVIRLTRMGRNKKPFYRIVVTDSRKRRDSGWIESIGYFNPVVEPKVLKIDEERYNYWLSVGAKPSEKVKKLASK</sequence>
<organism>
    <name type="scientific">Aliarcobacter butzleri (strain RM4018)</name>
    <name type="common">Arcobacter butzleri</name>
    <dbReference type="NCBI Taxonomy" id="367737"/>
    <lineage>
        <taxon>Bacteria</taxon>
        <taxon>Pseudomonadati</taxon>
        <taxon>Campylobacterota</taxon>
        <taxon>Epsilonproteobacteria</taxon>
        <taxon>Campylobacterales</taxon>
        <taxon>Arcobacteraceae</taxon>
        <taxon>Aliarcobacter</taxon>
    </lineage>
</organism>
<dbReference type="EMBL" id="CP000361">
    <property type="protein sequence ID" value="ABV68195.1"/>
    <property type="molecule type" value="Genomic_DNA"/>
</dbReference>
<dbReference type="RefSeq" id="WP_004511333.1">
    <property type="nucleotide sequence ID" value="NC_009850.1"/>
</dbReference>
<dbReference type="SMR" id="A8EW72"/>
<dbReference type="STRING" id="367737.Abu_1973"/>
<dbReference type="GeneID" id="24303597"/>
<dbReference type="KEGG" id="abu:Abu_1973"/>
<dbReference type="eggNOG" id="COG0228">
    <property type="taxonomic scope" value="Bacteria"/>
</dbReference>
<dbReference type="HOGENOM" id="CLU_100590_5_1_7"/>
<dbReference type="Proteomes" id="UP000001136">
    <property type="component" value="Chromosome"/>
</dbReference>
<dbReference type="GO" id="GO:0005737">
    <property type="term" value="C:cytoplasm"/>
    <property type="evidence" value="ECO:0007669"/>
    <property type="project" value="UniProtKB-ARBA"/>
</dbReference>
<dbReference type="GO" id="GO:0015935">
    <property type="term" value="C:small ribosomal subunit"/>
    <property type="evidence" value="ECO:0007669"/>
    <property type="project" value="TreeGrafter"/>
</dbReference>
<dbReference type="GO" id="GO:0003735">
    <property type="term" value="F:structural constituent of ribosome"/>
    <property type="evidence" value="ECO:0007669"/>
    <property type="project" value="InterPro"/>
</dbReference>
<dbReference type="GO" id="GO:0006412">
    <property type="term" value="P:translation"/>
    <property type="evidence" value="ECO:0007669"/>
    <property type="project" value="UniProtKB-UniRule"/>
</dbReference>
<dbReference type="FunFam" id="3.30.1320.10:FF:000005">
    <property type="entry name" value="30S ribosomal protein S16"/>
    <property type="match status" value="1"/>
</dbReference>
<dbReference type="Gene3D" id="3.30.1320.10">
    <property type="match status" value="1"/>
</dbReference>
<dbReference type="HAMAP" id="MF_00385">
    <property type="entry name" value="Ribosomal_bS16"/>
    <property type="match status" value="1"/>
</dbReference>
<dbReference type="InterPro" id="IPR000307">
    <property type="entry name" value="Ribosomal_bS16"/>
</dbReference>
<dbReference type="InterPro" id="IPR020592">
    <property type="entry name" value="Ribosomal_bS16_CS"/>
</dbReference>
<dbReference type="InterPro" id="IPR023803">
    <property type="entry name" value="Ribosomal_bS16_dom_sf"/>
</dbReference>
<dbReference type="NCBIfam" id="TIGR00002">
    <property type="entry name" value="S16"/>
    <property type="match status" value="1"/>
</dbReference>
<dbReference type="PANTHER" id="PTHR12919">
    <property type="entry name" value="30S RIBOSOMAL PROTEIN S16"/>
    <property type="match status" value="1"/>
</dbReference>
<dbReference type="PANTHER" id="PTHR12919:SF20">
    <property type="entry name" value="SMALL RIBOSOMAL SUBUNIT PROTEIN BS16M"/>
    <property type="match status" value="1"/>
</dbReference>
<dbReference type="Pfam" id="PF00886">
    <property type="entry name" value="Ribosomal_S16"/>
    <property type="match status" value="1"/>
</dbReference>
<dbReference type="SUPFAM" id="SSF54565">
    <property type="entry name" value="Ribosomal protein S16"/>
    <property type="match status" value="1"/>
</dbReference>
<dbReference type="PROSITE" id="PS00732">
    <property type="entry name" value="RIBOSOMAL_S16"/>
    <property type="match status" value="1"/>
</dbReference>
<name>RS16_ALIB4</name>
<accession>A8EW72</accession>